<gene>
    <name type="ordered locus">MK0078</name>
</gene>
<feature type="chain" id="PRO_0000151263" description="UPF0285 protein MK0078">
    <location>
        <begin position="1"/>
        <end position="332"/>
    </location>
</feature>
<sequence length="332" mass="35059">MTRMYVGIDHGTSGIKVAAYDGEGDPEFLGKAPRRKVAERGLLRSLPDEARRAVEEAECICLNYGMGDALTEFTPLEEAEDLGVGYGLRDTSGAGREFGAGRRMVEELSELGVEAYLAPGIHRDLPRLDGAFRVFSHVASGEKLGTARLALELSSSKDIVVCDTSSNTVSVVVKDGEVIGGIDACLGAPGVLQGPLDLEAIRRIDAGELSANGAFSTGGIVKIVNCAGEDPESAVEEFIQRCGKEEKEWLARLVAWEVAGLGVVYDCDEAWIGGTLSGDDEFMGVLERVLSKAFNKVAGLPPESASMGLALIAADIASGARSVLGVRISRRP</sequence>
<evidence type="ECO:0000255" key="1">
    <source>
        <dbReference type="HAMAP-Rule" id="MF_01087"/>
    </source>
</evidence>
<accession>Q8TZ61</accession>
<name>Y078_METKA</name>
<reference key="1">
    <citation type="journal article" date="2002" name="Proc. Natl. Acad. Sci. U.S.A.">
        <title>The complete genome of hyperthermophile Methanopyrus kandleri AV19 and monophyly of archaeal methanogens.</title>
        <authorList>
            <person name="Slesarev A.I."/>
            <person name="Mezhevaya K.V."/>
            <person name="Makarova K.S."/>
            <person name="Polushin N.N."/>
            <person name="Shcherbinina O.V."/>
            <person name="Shakhova V.V."/>
            <person name="Belova G.I."/>
            <person name="Aravind L."/>
            <person name="Natale D.A."/>
            <person name="Rogozin I.B."/>
            <person name="Tatusov R.L."/>
            <person name="Wolf Y.I."/>
            <person name="Stetter K.O."/>
            <person name="Malykh A.G."/>
            <person name="Koonin E.V."/>
            <person name="Kozyavkin S.A."/>
        </authorList>
    </citation>
    <scope>NUCLEOTIDE SEQUENCE [LARGE SCALE GENOMIC DNA]</scope>
    <source>
        <strain>AV19 / DSM 6324 / JCM 9639 / NBRC 100938</strain>
    </source>
</reference>
<comment type="similarity">
    <text evidence="1">Belongs to the UPF0285 family.</text>
</comment>
<dbReference type="EMBL" id="AE009439">
    <property type="protein sequence ID" value="AAM01295.1"/>
    <property type="molecule type" value="Genomic_DNA"/>
</dbReference>
<dbReference type="SMR" id="Q8TZ61"/>
<dbReference type="FunCoup" id="Q8TZ61">
    <property type="interactions" value="1"/>
</dbReference>
<dbReference type="STRING" id="190192.MK0078"/>
<dbReference type="PaxDb" id="190192-MK0078"/>
<dbReference type="EnsemblBacteria" id="AAM01295">
    <property type="protein sequence ID" value="AAM01295"/>
    <property type="gene ID" value="MK0078"/>
</dbReference>
<dbReference type="KEGG" id="mka:MK0078"/>
<dbReference type="PATRIC" id="fig|190192.8.peg.79"/>
<dbReference type="HOGENOM" id="CLU_846254_0_0_2"/>
<dbReference type="InParanoid" id="Q8TZ61"/>
<dbReference type="Proteomes" id="UP000001826">
    <property type="component" value="Chromosome"/>
</dbReference>
<dbReference type="HAMAP" id="MF_01087">
    <property type="entry name" value="UPF0285"/>
    <property type="match status" value="1"/>
</dbReference>
<dbReference type="InterPro" id="IPR043129">
    <property type="entry name" value="ATPase_NBD"/>
</dbReference>
<dbReference type="InterPro" id="IPR009927">
    <property type="entry name" value="DUF1464"/>
</dbReference>
<dbReference type="InterPro" id="IPR016735">
    <property type="entry name" value="Methan_mark_12"/>
</dbReference>
<dbReference type="NCBIfam" id="TIGR03281">
    <property type="entry name" value="methan_mark_12"/>
    <property type="match status" value="1"/>
</dbReference>
<dbReference type="Pfam" id="PF07318">
    <property type="entry name" value="DUF1464"/>
    <property type="match status" value="1"/>
</dbReference>
<dbReference type="PIRSF" id="PIRSF018783">
    <property type="entry name" value="UCP018783"/>
    <property type="match status" value="1"/>
</dbReference>
<dbReference type="SUPFAM" id="SSF53067">
    <property type="entry name" value="Actin-like ATPase domain"/>
    <property type="match status" value="1"/>
</dbReference>
<organism>
    <name type="scientific">Methanopyrus kandleri (strain AV19 / DSM 6324 / JCM 9639 / NBRC 100938)</name>
    <dbReference type="NCBI Taxonomy" id="190192"/>
    <lineage>
        <taxon>Archaea</taxon>
        <taxon>Methanobacteriati</taxon>
        <taxon>Methanobacteriota</taxon>
        <taxon>Methanomada group</taxon>
        <taxon>Methanopyri</taxon>
        <taxon>Methanopyrales</taxon>
        <taxon>Methanopyraceae</taxon>
        <taxon>Methanopyrus</taxon>
    </lineage>
</organism>
<proteinExistence type="inferred from homology"/>
<keyword id="KW-1185">Reference proteome</keyword>
<protein>
    <recommendedName>
        <fullName evidence="1">UPF0285 protein MK0078</fullName>
    </recommendedName>
</protein>